<reference key="1">
    <citation type="submission" date="2007-11" db="EMBL/GenBank/DDBJ databases">
        <title>Complete sequence of Petroga mobilis SJ95.</title>
        <authorList>
            <consortium name="US DOE Joint Genome Institute"/>
            <person name="Copeland A."/>
            <person name="Lucas S."/>
            <person name="Lapidus A."/>
            <person name="Barry K."/>
            <person name="Glavina del Rio T."/>
            <person name="Dalin E."/>
            <person name="Tice H."/>
            <person name="Pitluck S."/>
            <person name="Meincke L."/>
            <person name="Brettin T."/>
            <person name="Bruce D."/>
            <person name="Detter J.C."/>
            <person name="Han C."/>
            <person name="Kuske C.R."/>
            <person name="Schmutz J."/>
            <person name="Larimer F."/>
            <person name="Land M."/>
            <person name="Hauser L."/>
            <person name="Kyrpides N."/>
            <person name="Mikhailova N."/>
            <person name="Noll K."/>
            <person name="Richardson P."/>
        </authorList>
    </citation>
    <scope>NUCLEOTIDE SEQUENCE [LARGE SCALE GENOMIC DNA]</scope>
    <source>
        <strain>DSM 10674 / SJ95</strain>
    </source>
</reference>
<proteinExistence type="inferred from homology"/>
<feature type="chain" id="PRO_0000332867" description="Cysteine--tRNA ligase">
    <location>
        <begin position="1"/>
        <end position="469"/>
    </location>
</feature>
<feature type="short sequence motif" description="'HIGH' region">
    <location>
        <begin position="35"/>
        <end position="45"/>
    </location>
</feature>
<feature type="short sequence motif" description="'KMSKS' region">
    <location>
        <begin position="271"/>
        <end position="275"/>
    </location>
</feature>
<feature type="binding site" evidence="1">
    <location>
        <position position="33"/>
    </location>
    <ligand>
        <name>Zn(2+)</name>
        <dbReference type="ChEBI" id="CHEBI:29105"/>
    </ligand>
</feature>
<feature type="binding site" evidence="1">
    <location>
        <position position="214"/>
    </location>
    <ligand>
        <name>Zn(2+)</name>
        <dbReference type="ChEBI" id="CHEBI:29105"/>
    </ligand>
</feature>
<feature type="binding site" evidence="1">
    <location>
        <position position="239"/>
    </location>
    <ligand>
        <name>Zn(2+)</name>
        <dbReference type="ChEBI" id="CHEBI:29105"/>
    </ligand>
</feature>
<feature type="binding site" evidence="1">
    <location>
        <position position="243"/>
    </location>
    <ligand>
        <name>Zn(2+)</name>
        <dbReference type="ChEBI" id="CHEBI:29105"/>
    </ligand>
</feature>
<feature type="binding site" evidence="1">
    <location>
        <position position="274"/>
    </location>
    <ligand>
        <name>ATP</name>
        <dbReference type="ChEBI" id="CHEBI:30616"/>
    </ligand>
</feature>
<evidence type="ECO:0000255" key="1">
    <source>
        <dbReference type="HAMAP-Rule" id="MF_00041"/>
    </source>
</evidence>
<comment type="catalytic activity">
    <reaction evidence="1">
        <text>tRNA(Cys) + L-cysteine + ATP = L-cysteinyl-tRNA(Cys) + AMP + diphosphate</text>
        <dbReference type="Rhea" id="RHEA:17773"/>
        <dbReference type="Rhea" id="RHEA-COMP:9661"/>
        <dbReference type="Rhea" id="RHEA-COMP:9679"/>
        <dbReference type="ChEBI" id="CHEBI:30616"/>
        <dbReference type="ChEBI" id="CHEBI:33019"/>
        <dbReference type="ChEBI" id="CHEBI:35235"/>
        <dbReference type="ChEBI" id="CHEBI:78442"/>
        <dbReference type="ChEBI" id="CHEBI:78517"/>
        <dbReference type="ChEBI" id="CHEBI:456215"/>
        <dbReference type="EC" id="6.1.1.16"/>
    </reaction>
</comment>
<comment type="cofactor">
    <cofactor evidence="1">
        <name>Zn(2+)</name>
        <dbReference type="ChEBI" id="CHEBI:29105"/>
    </cofactor>
    <text evidence="1">Binds 1 zinc ion per subunit.</text>
</comment>
<comment type="subunit">
    <text evidence="1">Monomer.</text>
</comment>
<comment type="subcellular location">
    <subcellularLocation>
        <location evidence="1">Cytoplasm</location>
    </subcellularLocation>
</comment>
<comment type="similarity">
    <text evidence="1">Belongs to the class-I aminoacyl-tRNA synthetase family.</text>
</comment>
<name>SYC_PETMO</name>
<sequence>MKRFPTIKIYDTLSGQVVDLVPVKEGEIKIYLCGPTVYNLLHIGNARPIIIFDAFRRFLEYIGYKVTLVQNFTDIDDKIIEQAKKENLPFEEVGKRYIIEYWRDMTALKARAFNFHPKTTNYVDEIISYIKELEEKGYAYKAENGDVYFEVEKFSRYGELSHRKVEDLKVGVRVEVSEYKKNPLDFALWKASKEGEPFWESPWGKGRPGWHIECSVMSSEILGDTFDIHAGGNDLIFPHHENERAQAIAKSGKDFAKYWMHNGMIRMAQDKMSKSLGNVWYLRDLLKKFDSDVLKIFILSKHYRIPIDVSEELLRNQEVSVNRVKESLNEAETFFNGKVPCPQKMNYFKEQEEYLISSLSNDFDTPSVVARIFELSRDLNKALNSRDEETIKNNYYIIRNIYGSVLGVFETNEQIQKNNVELNQLMEIILNVRSALREEKLYNLSDYIRDNLSKIGIEIKDTPEGTKWS</sequence>
<protein>
    <recommendedName>
        <fullName evidence="1">Cysteine--tRNA ligase</fullName>
        <ecNumber evidence="1">6.1.1.16</ecNumber>
    </recommendedName>
    <alternativeName>
        <fullName evidence="1">Cysteinyl-tRNA synthetase</fullName>
        <shortName evidence="1">CysRS</shortName>
    </alternativeName>
</protein>
<organism>
    <name type="scientific">Petrotoga mobilis (strain DSM 10674 / SJ95)</name>
    <dbReference type="NCBI Taxonomy" id="403833"/>
    <lineage>
        <taxon>Bacteria</taxon>
        <taxon>Thermotogati</taxon>
        <taxon>Thermotogota</taxon>
        <taxon>Thermotogae</taxon>
        <taxon>Petrotogales</taxon>
        <taxon>Petrotogaceae</taxon>
        <taxon>Petrotoga</taxon>
    </lineage>
</organism>
<dbReference type="EC" id="6.1.1.16" evidence="1"/>
<dbReference type="EMBL" id="CP000879">
    <property type="protein sequence ID" value="ABX32520.1"/>
    <property type="molecule type" value="Genomic_DNA"/>
</dbReference>
<dbReference type="SMR" id="A9BGT9"/>
<dbReference type="STRING" id="403833.Pmob_1831"/>
<dbReference type="KEGG" id="pmo:Pmob_1831"/>
<dbReference type="eggNOG" id="COG0215">
    <property type="taxonomic scope" value="Bacteria"/>
</dbReference>
<dbReference type="HOGENOM" id="CLU_013528_0_1_0"/>
<dbReference type="OrthoDB" id="9815130at2"/>
<dbReference type="Proteomes" id="UP000000789">
    <property type="component" value="Chromosome"/>
</dbReference>
<dbReference type="GO" id="GO:0005829">
    <property type="term" value="C:cytosol"/>
    <property type="evidence" value="ECO:0007669"/>
    <property type="project" value="TreeGrafter"/>
</dbReference>
<dbReference type="GO" id="GO:0005524">
    <property type="term" value="F:ATP binding"/>
    <property type="evidence" value="ECO:0007669"/>
    <property type="project" value="UniProtKB-UniRule"/>
</dbReference>
<dbReference type="GO" id="GO:0004817">
    <property type="term" value="F:cysteine-tRNA ligase activity"/>
    <property type="evidence" value="ECO:0007669"/>
    <property type="project" value="UniProtKB-UniRule"/>
</dbReference>
<dbReference type="GO" id="GO:0008270">
    <property type="term" value="F:zinc ion binding"/>
    <property type="evidence" value="ECO:0007669"/>
    <property type="project" value="UniProtKB-UniRule"/>
</dbReference>
<dbReference type="GO" id="GO:0006423">
    <property type="term" value="P:cysteinyl-tRNA aminoacylation"/>
    <property type="evidence" value="ECO:0007669"/>
    <property type="project" value="UniProtKB-UniRule"/>
</dbReference>
<dbReference type="CDD" id="cd00672">
    <property type="entry name" value="CysRS_core"/>
    <property type="match status" value="1"/>
</dbReference>
<dbReference type="FunFam" id="3.40.50.620:FF:000009">
    <property type="entry name" value="Cysteine--tRNA ligase"/>
    <property type="match status" value="1"/>
</dbReference>
<dbReference type="Gene3D" id="1.20.120.1910">
    <property type="entry name" value="Cysteine-tRNA ligase, C-terminal anti-codon recognition domain"/>
    <property type="match status" value="1"/>
</dbReference>
<dbReference type="Gene3D" id="3.40.50.620">
    <property type="entry name" value="HUPs"/>
    <property type="match status" value="1"/>
</dbReference>
<dbReference type="HAMAP" id="MF_00041">
    <property type="entry name" value="Cys_tRNA_synth"/>
    <property type="match status" value="1"/>
</dbReference>
<dbReference type="InterPro" id="IPR015803">
    <property type="entry name" value="Cys-tRNA-ligase"/>
</dbReference>
<dbReference type="InterPro" id="IPR015273">
    <property type="entry name" value="Cys-tRNA-synt_Ia_DALR"/>
</dbReference>
<dbReference type="InterPro" id="IPR024909">
    <property type="entry name" value="Cys-tRNA/MSH_ligase"/>
</dbReference>
<dbReference type="InterPro" id="IPR014729">
    <property type="entry name" value="Rossmann-like_a/b/a_fold"/>
</dbReference>
<dbReference type="InterPro" id="IPR032678">
    <property type="entry name" value="tRNA-synt_1_cat_dom"/>
</dbReference>
<dbReference type="InterPro" id="IPR009080">
    <property type="entry name" value="tRNAsynth_Ia_anticodon-bd"/>
</dbReference>
<dbReference type="NCBIfam" id="TIGR00435">
    <property type="entry name" value="cysS"/>
    <property type="match status" value="1"/>
</dbReference>
<dbReference type="PANTHER" id="PTHR10890:SF3">
    <property type="entry name" value="CYSTEINE--TRNA LIGASE, CYTOPLASMIC"/>
    <property type="match status" value="1"/>
</dbReference>
<dbReference type="PANTHER" id="PTHR10890">
    <property type="entry name" value="CYSTEINYL-TRNA SYNTHETASE"/>
    <property type="match status" value="1"/>
</dbReference>
<dbReference type="Pfam" id="PF09190">
    <property type="entry name" value="DALR_2"/>
    <property type="match status" value="1"/>
</dbReference>
<dbReference type="Pfam" id="PF01406">
    <property type="entry name" value="tRNA-synt_1e"/>
    <property type="match status" value="1"/>
</dbReference>
<dbReference type="PRINTS" id="PR00983">
    <property type="entry name" value="TRNASYNTHCYS"/>
</dbReference>
<dbReference type="SUPFAM" id="SSF47323">
    <property type="entry name" value="Anticodon-binding domain of a subclass of class I aminoacyl-tRNA synthetases"/>
    <property type="match status" value="1"/>
</dbReference>
<dbReference type="SUPFAM" id="SSF52374">
    <property type="entry name" value="Nucleotidylyl transferase"/>
    <property type="match status" value="1"/>
</dbReference>
<accession>A9BGT9</accession>
<gene>
    <name evidence="1" type="primary">cysS</name>
    <name type="ordered locus">Pmob_1831</name>
</gene>
<keyword id="KW-0030">Aminoacyl-tRNA synthetase</keyword>
<keyword id="KW-0067">ATP-binding</keyword>
<keyword id="KW-0963">Cytoplasm</keyword>
<keyword id="KW-0436">Ligase</keyword>
<keyword id="KW-0479">Metal-binding</keyword>
<keyword id="KW-0547">Nucleotide-binding</keyword>
<keyword id="KW-0648">Protein biosynthesis</keyword>
<keyword id="KW-0862">Zinc</keyword>